<feature type="chain" id="PRO_0000134457" description="Isopentenyl-diphosphate delta-isomerase">
    <location>
        <begin position="1"/>
        <end position="348"/>
    </location>
</feature>
<feature type="binding site" evidence="1">
    <location>
        <begin position="5"/>
        <end position="6"/>
    </location>
    <ligand>
        <name>substrate</name>
    </ligand>
</feature>
<feature type="binding site" evidence="1">
    <location>
        <position position="61"/>
    </location>
    <ligand>
        <name>FMN</name>
        <dbReference type="ChEBI" id="CHEBI:58210"/>
    </ligand>
</feature>
<feature type="binding site" evidence="1">
    <location>
        <begin position="62"/>
        <end position="64"/>
    </location>
    <ligand>
        <name>FMN</name>
        <dbReference type="ChEBI" id="CHEBI:58210"/>
    </ligand>
</feature>
<feature type="binding site" evidence="1">
    <location>
        <begin position="92"/>
        <end position="94"/>
    </location>
    <ligand>
        <name>substrate</name>
    </ligand>
</feature>
<feature type="binding site" evidence="1">
    <location>
        <position position="92"/>
    </location>
    <ligand>
        <name>FMN</name>
        <dbReference type="ChEBI" id="CHEBI:58210"/>
    </ligand>
</feature>
<feature type="binding site" evidence="1">
    <location>
        <position position="120"/>
    </location>
    <ligand>
        <name>FMN</name>
        <dbReference type="ChEBI" id="CHEBI:58210"/>
    </ligand>
</feature>
<feature type="binding site" evidence="1">
    <location>
        <position position="159"/>
    </location>
    <ligand>
        <name>substrate</name>
    </ligand>
</feature>
<feature type="binding site" evidence="1">
    <location>
        <position position="160"/>
    </location>
    <ligand>
        <name>Mg(2+)</name>
        <dbReference type="ChEBI" id="CHEBI:18420"/>
    </ligand>
</feature>
<feature type="binding site" evidence="1">
    <location>
        <position position="189"/>
    </location>
    <ligand>
        <name>FMN</name>
        <dbReference type="ChEBI" id="CHEBI:58210"/>
    </ligand>
</feature>
<feature type="binding site" evidence="1">
    <location>
        <position position="214"/>
    </location>
    <ligand>
        <name>FMN</name>
        <dbReference type="ChEBI" id="CHEBI:58210"/>
    </ligand>
</feature>
<feature type="binding site" evidence="1">
    <location>
        <position position="219"/>
    </location>
    <ligand>
        <name>FMN</name>
        <dbReference type="ChEBI" id="CHEBI:58210"/>
    </ligand>
</feature>
<feature type="binding site" evidence="1">
    <location>
        <begin position="269"/>
        <end position="271"/>
    </location>
    <ligand>
        <name>FMN</name>
        <dbReference type="ChEBI" id="CHEBI:58210"/>
    </ligand>
</feature>
<feature type="binding site" evidence="1">
    <location>
        <begin position="290"/>
        <end position="291"/>
    </location>
    <ligand>
        <name>FMN</name>
        <dbReference type="ChEBI" id="CHEBI:58210"/>
    </ligand>
</feature>
<sequence>MIGKRKEEHIRIAENEDVSSFHNFWDDISLMHEADPEVNYDEIDTSVDFLGKKLKFPMIISSMTGGAEIAKNINRNLAVAAERFGIGMGVGSMRAAIVDRSIEDTYSVINESHVPLKIANIGAPQLVRQDKDAVSNRDIAYIYDLIKADFLAVHFNFLQEMVQPEGDRNSKGVIDRIKDLSGSFNIIAKETGSGFSRRTAERLIDAGVKAIEVSGVSGTTFAAVEYYRARKENNLEKMRIGETFWNWGIPSPASVYYCSDLAPVIGSGGLRNGLDLAKAIAMGATAGGFARSLLKDADTDPEMLMKNIELIQREFRVALFLTGNKNVYELKFTKKVIVDPLRSWLEAK</sequence>
<reference key="1">
    <citation type="journal article" date="2000" name="Nature">
        <title>The genome sequence of the thermoacidophilic scavenger Thermoplasma acidophilum.</title>
        <authorList>
            <person name="Ruepp A."/>
            <person name="Graml W."/>
            <person name="Santos-Martinez M.-L."/>
            <person name="Koretke K.K."/>
            <person name="Volker C."/>
            <person name="Mewes H.-W."/>
            <person name="Frishman D."/>
            <person name="Stocker S."/>
            <person name="Lupas A.N."/>
            <person name="Baumeister W."/>
        </authorList>
    </citation>
    <scope>NUCLEOTIDE SEQUENCE [LARGE SCALE GENOMIC DNA]</scope>
    <source>
        <strain>ATCC 25905 / DSM 1728 / JCM 9062 / NBRC 15155 / AMRC-C165</strain>
    </source>
</reference>
<organism>
    <name type="scientific">Thermoplasma acidophilum (strain ATCC 25905 / DSM 1728 / JCM 9062 / NBRC 15155 / AMRC-C165)</name>
    <dbReference type="NCBI Taxonomy" id="273075"/>
    <lineage>
        <taxon>Archaea</taxon>
        <taxon>Methanobacteriati</taxon>
        <taxon>Thermoplasmatota</taxon>
        <taxon>Thermoplasmata</taxon>
        <taxon>Thermoplasmatales</taxon>
        <taxon>Thermoplasmataceae</taxon>
        <taxon>Thermoplasma</taxon>
    </lineage>
</organism>
<proteinExistence type="inferred from homology"/>
<name>IDI2_THEAC</name>
<gene>
    <name evidence="1" type="primary">fni</name>
    <name type="ordered locus">Ta0102</name>
</gene>
<protein>
    <recommendedName>
        <fullName evidence="1">Isopentenyl-diphosphate delta-isomerase</fullName>
        <shortName evidence="1">IPP isomerase</shortName>
        <ecNumber evidence="1">5.3.3.2</ecNumber>
    </recommendedName>
    <alternativeName>
        <fullName evidence="1">Isopentenyl diphosphate:dimethylallyl diphosphate isomerase</fullName>
    </alternativeName>
    <alternativeName>
        <fullName evidence="1">Isopentenyl pyrophosphate isomerase</fullName>
    </alternativeName>
    <alternativeName>
        <fullName evidence="1">Type 2 isopentenyl diphosphate isomerase</fullName>
        <shortName evidence="1">IDI-2</shortName>
    </alternativeName>
</protein>
<comment type="function">
    <text evidence="1">Involved in the biosynthesis of isoprenoids. Catalyzes the 1,3-allylic rearrangement of the homoallylic substrate isopentenyl (IPP) to its allylic isomer, dimethylallyl diphosphate (DMAPP).</text>
</comment>
<comment type="catalytic activity">
    <reaction evidence="1">
        <text>isopentenyl diphosphate = dimethylallyl diphosphate</text>
        <dbReference type="Rhea" id="RHEA:23284"/>
        <dbReference type="ChEBI" id="CHEBI:57623"/>
        <dbReference type="ChEBI" id="CHEBI:128769"/>
        <dbReference type="EC" id="5.3.3.2"/>
    </reaction>
</comment>
<comment type="cofactor">
    <cofactor evidence="1">
        <name>FMN</name>
        <dbReference type="ChEBI" id="CHEBI:58210"/>
    </cofactor>
</comment>
<comment type="cofactor">
    <cofactor evidence="1">
        <name>NADPH</name>
        <dbReference type="ChEBI" id="CHEBI:57783"/>
    </cofactor>
</comment>
<comment type="cofactor">
    <cofactor evidence="1">
        <name>Mg(2+)</name>
        <dbReference type="ChEBI" id="CHEBI:18420"/>
    </cofactor>
</comment>
<comment type="subunit">
    <text evidence="1">Homooctamer. Dimer of tetramers.</text>
</comment>
<comment type="subcellular location">
    <subcellularLocation>
        <location evidence="1">Cytoplasm</location>
    </subcellularLocation>
</comment>
<comment type="similarity">
    <text evidence="1">Belongs to the IPP isomerase type 2 family.</text>
</comment>
<keyword id="KW-0963">Cytoplasm</keyword>
<keyword id="KW-0285">Flavoprotein</keyword>
<keyword id="KW-0288">FMN</keyword>
<keyword id="KW-0413">Isomerase</keyword>
<keyword id="KW-0414">Isoprene biosynthesis</keyword>
<keyword id="KW-0460">Magnesium</keyword>
<keyword id="KW-0479">Metal-binding</keyword>
<keyword id="KW-0521">NADP</keyword>
<keyword id="KW-1185">Reference proteome</keyword>
<evidence type="ECO:0000255" key="1">
    <source>
        <dbReference type="HAMAP-Rule" id="MF_00354"/>
    </source>
</evidence>
<dbReference type="EC" id="5.3.3.2" evidence="1"/>
<dbReference type="EMBL" id="AL445063">
    <property type="protein sequence ID" value="CAC11250.1"/>
    <property type="molecule type" value="Genomic_DNA"/>
</dbReference>
<dbReference type="RefSeq" id="WP_010900529.1">
    <property type="nucleotide sequence ID" value="NC_002578.1"/>
</dbReference>
<dbReference type="SMR" id="Q9HLX2"/>
<dbReference type="FunCoup" id="Q9HLX2">
    <property type="interactions" value="11"/>
</dbReference>
<dbReference type="STRING" id="273075.gene:9571317"/>
<dbReference type="PaxDb" id="273075-Ta0102"/>
<dbReference type="EnsemblBacteria" id="CAC11250">
    <property type="protein sequence ID" value="CAC11250"/>
    <property type="gene ID" value="CAC11250"/>
</dbReference>
<dbReference type="KEGG" id="tac:Ta0102"/>
<dbReference type="eggNOG" id="arCOG00613">
    <property type="taxonomic scope" value="Archaea"/>
</dbReference>
<dbReference type="HOGENOM" id="CLU_065515_1_0_2"/>
<dbReference type="InParanoid" id="Q9HLX2"/>
<dbReference type="OrthoDB" id="371955at2157"/>
<dbReference type="Proteomes" id="UP000001024">
    <property type="component" value="Chromosome"/>
</dbReference>
<dbReference type="GO" id="GO:0005737">
    <property type="term" value="C:cytoplasm"/>
    <property type="evidence" value="ECO:0007669"/>
    <property type="project" value="UniProtKB-SubCell"/>
</dbReference>
<dbReference type="GO" id="GO:0010181">
    <property type="term" value="F:FMN binding"/>
    <property type="evidence" value="ECO:0007669"/>
    <property type="project" value="UniProtKB-UniRule"/>
</dbReference>
<dbReference type="GO" id="GO:0004452">
    <property type="term" value="F:isopentenyl-diphosphate delta-isomerase activity"/>
    <property type="evidence" value="ECO:0007669"/>
    <property type="project" value="UniProtKB-UniRule"/>
</dbReference>
<dbReference type="GO" id="GO:0000287">
    <property type="term" value="F:magnesium ion binding"/>
    <property type="evidence" value="ECO:0007669"/>
    <property type="project" value="UniProtKB-UniRule"/>
</dbReference>
<dbReference type="GO" id="GO:0070402">
    <property type="term" value="F:NADPH binding"/>
    <property type="evidence" value="ECO:0007669"/>
    <property type="project" value="UniProtKB-UniRule"/>
</dbReference>
<dbReference type="GO" id="GO:0016491">
    <property type="term" value="F:oxidoreductase activity"/>
    <property type="evidence" value="ECO:0007669"/>
    <property type="project" value="InterPro"/>
</dbReference>
<dbReference type="GO" id="GO:0008299">
    <property type="term" value="P:isoprenoid biosynthetic process"/>
    <property type="evidence" value="ECO:0007669"/>
    <property type="project" value="UniProtKB-UniRule"/>
</dbReference>
<dbReference type="CDD" id="cd02811">
    <property type="entry name" value="IDI-2_FMN"/>
    <property type="match status" value="1"/>
</dbReference>
<dbReference type="Gene3D" id="3.20.20.70">
    <property type="entry name" value="Aldolase class I"/>
    <property type="match status" value="1"/>
</dbReference>
<dbReference type="HAMAP" id="MF_00354">
    <property type="entry name" value="Idi_2"/>
    <property type="match status" value="1"/>
</dbReference>
<dbReference type="InterPro" id="IPR013785">
    <property type="entry name" value="Aldolase_TIM"/>
</dbReference>
<dbReference type="InterPro" id="IPR000262">
    <property type="entry name" value="FMN-dep_DH"/>
</dbReference>
<dbReference type="InterPro" id="IPR011179">
    <property type="entry name" value="IPdP_isomerase"/>
</dbReference>
<dbReference type="NCBIfam" id="TIGR02151">
    <property type="entry name" value="IPP_isom_2"/>
    <property type="match status" value="1"/>
</dbReference>
<dbReference type="PANTHER" id="PTHR43665">
    <property type="entry name" value="ISOPENTENYL-DIPHOSPHATE DELTA-ISOMERASE"/>
    <property type="match status" value="1"/>
</dbReference>
<dbReference type="PANTHER" id="PTHR43665:SF1">
    <property type="entry name" value="ISOPENTENYL-DIPHOSPHATE DELTA-ISOMERASE"/>
    <property type="match status" value="1"/>
</dbReference>
<dbReference type="Pfam" id="PF01070">
    <property type="entry name" value="FMN_dh"/>
    <property type="match status" value="1"/>
</dbReference>
<dbReference type="PIRSF" id="PIRSF003314">
    <property type="entry name" value="IPP_isomerase"/>
    <property type="match status" value="1"/>
</dbReference>
<dbReference type="SUPFAM" id="SSF51395">
    <property type="entry name" value="FMN-linked oxidoreductases"/>
    <property type="match status" value="1"/>
</dbReference>
<accession>Q9HLX2</accession>